<feature type="initiator methionine" description="Removed" evidence="2">
    <location>
        <position position="1"/>
    </location>
</feature>
<feature type="chain" id="PRO_0000087297" description="Filamin-A">
    <location>
        <begin position="2"/>
        <end position="2647"/>
    </location>
</feature>
<feature type="domain" description="Calponin-homology (CH) 1" evidence="3">
    <location>
        <begin position="43"/>
        <end position="149"/>
    </location>
</feature>
<feature type="domain" description="Calponin-homology (CH) 2" evidence="3">
    <location>
        <begin position="166"/>
        <end position="269"/>
    </location>
</feature>
<feature type="repeat" description="Filamin 1">
    <location>
        <begin position="276"/>
        <end position="374"/>
    </location>
</feature>
<feature type="repeat" description="Filamin 2">
    <location>
        <begin position="376"/>
        <end position="474"/>
    </location>
</feature>
<feature type="repeat" description="Filamin 3">
    <location>
        <begin position="475"/>
        <end position="570"/>
    </location>
</feature>
<feature type="repeat" description="Filamin 4">
    <location>
        <begin position="571"/>
        <end position="663"/>
    </location>
</feature>
<feature type="repeat" description="Filamin 5">
    <location>
        <begin position="667"/>
        <end position="763"/>
    </location>
</feature>
<feature type="repeat" description="Filamin 6">
    <location>
        <begin position="764"/>
        <end position="866"/>
    </location>
</feature>
<feature type="repeat" description="Filamin 7">
    <location>
        <begin position="867"/>
        <end position="965"/>
    </location>
</feature>
<feature type="repeat" description="Filamin 8">
    <location>
        <begin position="966"/>
        <end position="1061"/>
    </location>
</feature>
<feature type="repeat" description="Filamin 9">
    <location>
        <begin position="1062"/>
        <end position="1154"/>
    </location>
</feature>
<feature type="repeat" description="Filamin 10">
    <location>
        <begin position="1155"/>
        <end position="1249"/>
    </location>
</feature>
<feature type="repeat" description="Filamin 11">
    <location>
        <begin position="1250"/>
        <end position="1349"/>
    </location>
</feature>
<feature type="repeat" description="Filamin 12">
    <location>
        <begin position="1350"/>
        <end position="1442"/>
    </location>
</feature>
<feature type="repeat" description="Filamin 13">
    <location>
        <begin position="1443"/>
        <end position="1539"/>
    </location>
</feature>
<feature type="repeat" description="Filamin 14">
    <location>
        <begin position="1540"/>
        <end position="1636"/>
    </location>
</feature>
<feature type="repeat" description="Filamin 15">
    <location>
        <begin position="1641"/>
        <end position="1740"/>
    </location>
</feature>
<feature type="repeat" description="Filamin 16">
    <location>
        <begin position="1765"/>
        <end position="1860"/>
    </location>
</feature>
<feature type="repeat" description="Filamin 17">
    <location>
        <begin position="1861"/>
        <end position="1952"/>
    </location>
</feature>
<feature type="repeat" description="Filamin 18">
    <location>
        <begin position="1953"/>
        <end position="2039"/>
    </location>
</feature>
<feature type="repeat" description="Filamin 19">
    <location>
        <begin position="2042"/>
        <end position="2134"/>
    </location>
</feature>
<feature type="repeat" description="Filamin 20">
    <location>
        <begin position="2135"/>
        <end position="2230"/>
    </location>
</feature>
<feature type="repeat" description="Filamin 21">
    <location>
        <begin position="2233"/>
        <end position="2325"/>
    </location>
</feature>
<feature type="repeat" description="Filamin 22">
    <location>
        <begin position="2327"/>
        <end position="2420"/>
    </location>
</feature>
<feature type="repeat" description="Filamin 23">
    <location>
        <begin position="2424"/>
        <end position="2516"/>
    </location>
</feature>
<feature type="repeat" description="Filamin 24">
    <location>
        <begin position="2552"/>
        <end position="2646"/>
    </location>
</feature>
<feature type="region of interest" description="Disordered" evidence="4">
    <location>
        <begin position="1"/>
        <end position="37"/>
    </location>
</feature>
<feature type="region of interest" description="Actin-binding">
    <location>
        <begin position="2"/>
        <end position="274"/>
    </location>
</feature>
<feature type="region of interest" description="Disordered" evidence="4">
    <location>
        <begin position="271"/>
        <end position="294"/>
    </location>
</feature>
<feature type="region of interest" description="Interaction with furin">
    <location>
        <begin position="1490"/>
        <end position="1607"/>
    </location>
</feature>
<feature type="region of interest" description="Hinge 1" evidence="1">
    <location>
        <begin position="1741"/>
        <end position="1778"/>
    </location>
</feature>
<feature type="region of interest" description="Self-association site, tail" evidence="1">
    <location>
        <begin position="2517"/>
        <end position="2647"/>
    </location>
</feature>
<feature type="region of interest" description="Hinge 2" evidence="1">
    <location>
        <begin position="2517"/>
        <end position="2553"/>
    </location>
</feature>
<feature type="compositionally biased region" description="Basic and acidic residues" evidence="4">
    <location>
        <begin position="22"/>
        <end position="37"/>
    </location>
</feature>
<feature type="modified residue" description="N-acetylserine" evidence="2">
    <location>
        <position position="2"/>
    </location>
</feature>
<feature type="modified residue" description="Phosphoserine" evidence="2">
    <location>
        <position position="11"/>
    </location>
</feature>
<feature type="modified residue" description="Phosphoserine" evidence="20">
    <location>
        <position position="16"/>
    </location>
</feature>
<feature type="modified residue" description="Phosphoserine" evidence="20">
    <location>
        <position position="20"/>
    </location>
</feature>
<feature type="modified residue" description="N6-acetyllysine" evidence="21">
    <location>
        <position position="376"/>
    </location>
</feature>
<feature type="modified residue" description="N6-acetyllysine" evidence="2">
    <location>
        <position position="508"/>
    </location>
</feature>
<feature type="modified residue" description="N6-acetyllysine" evidence="21">
    <location>
        <position position="700"/>
    </location>
</feature>
<feature type="modified residue" description="N6-acetyllysine" evidence="2">
    <location>
        <position position="781"/>
    </location>
</feature>
<feature type="modified residue" description="N6-acetyllysine" evidence="2">
    <location>
        <position position="837"/>
    </location>
</feature>
<feature type="modified residue" description="N6-acetyllysine" evidence="21">
    <location>
        <position position="865"/>
    </location>
</feature>
<feature type="modified residue" description="N6-acetyllysine" evidence="21">
    <location>
        <position position="906"/>
    </location>
</feature>
<feature type="modified residue" description="Phosphoserine" evidence="20">
    <location>
        <position position="968"/>
    </location>
</feature>
<feature type="modified residue" description="Phosphoserine" evidence="2">
    <location>
        <position position="1055"/>
    </location>
</feature>
<feature type="modified residue" description="N6-acetyllysine; alternate" evidence="21">
    <location>
        <position position="1071"/>
    </location>
</feature>
<feature type="modified residue" description="N6-succinyllysine; alternate" evidence="21">
    <location>
        <position position="1071"/>
    </location>
</feature>
<feature type="modified residue" description="Phosphoserine" evidence="2">
    <location>
        <position position="1084"/>
    </location>
</feature>
<feature type="modified residue" description="Phosphothreonine" evidence="2">
    <location>
        <position position="1089"/>
    </location>
</feature>
<feature type="modified residue" description="Phosphoserine" evidence="2">
    <location>
        <position position="1301"/>
    </location>
</feature>
<feature type="modified residue" description="Phosphoserine" evidence="2">
    <location>
        <position position="1338"/>
    </location>
</feature>
<feature type="modified residue" description="N6-acetyllysine" evidence="21">
    <location>
        <position position="1372"/>
    </location>
</feature>
<feature type="modified residue" description="Phosphoserine" evidence="17 18 20">
    <location>
        <position position="1459"/>
    </location>
</feature>
<feature type="modified residue" description="Phosphoserine" evidence="2">
    <location>
        <position position="1533"/>
    </location>
</feature>
<feature type="modified residue" description="N6-acetyllysine" evidence="21">
    <location>
        <position position="1538"/>
    </location>
</feature>
<feature type="modified residue" description="Phosphoserine" evidence="2">
    <location>
        <position position="1630"/>
    </location>
</feature>
<feature type="modified residue" description="Phosphoserine" evidence="2">
    <location>
        <position position="1734"/>
    </location>
</feature>
<feature type="modified residue" description="Phosphothreonine" evidence="18 20">
    <location>
        <position position="1750"/>
    </location>
</feature>
<feature type="modified residue" description="Phosphoserine" evidence="2">
    <location>
        <position position="1835"/>
    </location>
</feature>
<feature type="modified residue" description="Phosphoserine" evidence="2">
    <location>
        <position position="1967"/>
    </location>
</feature>
<feature type="modified residue" description="Phosphoserine" evidence="2">
    <location>
        <position position="2053"/>
    </location>
</feature>
<feature type="modified residue" description="Phosphoserine" evidence="2">
    <location>
        <position position="2128"/>
    </location>
</feature>
<feature type="modified residue" description="Phosphoserine" evidence="19 20">
    <location>
        <position position="2152"/>
    </location>
</feature>
<feature type="modified residue" description="Phosphoserine" evidence="2">
    <location>
        <position position="2158"/>
    </location>
</feature>
<feature type="modified residue" description="Phosphoserine" evidence="2">
    <location>
        <position position="2163"/>
    </location>
</feature>
<feature type="modified residue" description="Phosphoserine" evidence="20">
    <location>
        <position position="2180"/>
    </location>
</feature>
<feature type="modified residue" description="Phosphoserine" evidence="2">
    <location>
        <position position="2284"/>
    </location>
</feature>
<feature type="modified residue" description="Phosphoserine" evidence="2">
    <location>
        <position position="2327"/>
    </location>
</feature>
<feature type="modified residue" description="Phosphoserine" evidence="20">
    <location>
        <position position="2329"/>
    </location>
</feature>
<feature type="modified residue" description="Phosphothreonine" evidence="20">
    <location>
        <position position="2336"/>
    </location>
</feature>
<feature type="modified residue" description="Phosphoserine" evidence="2">
    <location>
        <position position="2338"/>
    </location>
</feature>
<feature type="modified residue" description="Phosphoserine" evidence="20">
    <location>
        <position position="2370"/>
    </location>
</feature>
<feature type="modified residue" description="Phosphoserine" evidence="2">
    <location>
        <position position="2414"/>
    </location>
</feature>
<feature type="modified residue" description="Phosphoserine" evidence="2">
    <location>
        <position position="2510"/>
    </location>
</feature>
<feature type="modified residue" description="Phosphoserine" evidence="20">
    <location>
        <position position="2523"/>
    </location>
</feature>
<feature type="modified residue" description="Phosphoserine" evidence="20">
    <location>
        <position position="2526"/>
    </location>
</feature>
<feature type="modified residue" description="N6-acetyllysine; alternate" evidence="21">
    <location>
        <position position="2569"/>
    </location>
</feature>
<feature type="modified residue" description="N6-succinyllysine; alternate" evidence="21">
    <location>
        <position position="2569"/>
    </location>
</feature>
<feature type="modified residue" description="N6-acetyllysine" evidence="21">
    <location>
        <position position="2575"/>
    </location>
</feature>
<feature type="modified residue" description="Phosphothreonine" evidence="20">
    <location>
        <position position="2599"/>
    </location>
</feature>
<feature type="modified residue" description="N6-acetyllysine" evidence="2">
    <location>
        <position position="2607"/>
    </location>
</feature>
<feature type="modified residue" description="N6-acetyllysine" evidence="2">
    <location>
        <position position="2621"/>
    </location>
</feature>
<feature type="cross-link" description="Glycyl lysine isopeptide (Lys-Gly) (interchain with G-Cter in ubiquitin)" evidence="2">
    <location>
        <position position="42"/>
    </location>
</feature>
<feature type="cross-link" description="Glycyl lysine isopeptide (Lys-Gly) (interchain with G-Cter in ubiquitin)" evidence="2">
    <location>
        <position position="43"/>
    </location>
</feature>
<feature type="cross-link" description="Glycyl lysine isopeptide (Lys-Gly) (interchain with G-Cter in ubiquitin)" evidence="2">
    <location>
        <position position="135"/>
    </location>
</feature>
<feature type="cross-link" description="Glycyl lysine isopeptide (Lys-Gly) (interchain with G-Cter in SUMO1); alternate" evidence="2">
    <location>
        <position position="299"/>
    </location>
</feature>
<feature type="cross-link" description="Glycyl lysine isopeptide (Lys-Gly) (interchain with G-Cter in SUMO2); alternate" evidence="2">
    <location>
        <position position="299"/>
    </location>
</feature>
<feature type="splice variant" id="VSP_008779" description="In isoform 2." evidence="15">
    <original>DSKAIVDGNLKLILGLIWTLILHYSISMPMWDEEEDEEAKKQTPKQRLLGWIQNKLPQLPITNFSRDWQSGRALGALVDSCAPGLCPDWDSWDASKPVNNAREAMQQADDWLGIPQVITPEEIVD</original>
    <variation>GEGTGYTGALSGCGRGRNKFFLSSPLESLLVVFPSCCTQPRLPLGPLAALFFEVLENKRLAWRACEPLRAPARSALLACSQAELTSSVGRAPNAAPEVGQAQTRLLPLRAAPHPWDTHAFHLQQF</variation>
    <location>
        <begin position="125"/>
        <end position="249"/>
    </location>
</feature>
<feature type="splice variant" id="VSP_008780" description="In isoform 2." evidence="15">
    <location>
        <begin position="250"/>
        <end position="2647"/>
    </location>
</feature>
<feature type="sequence conflict" description="In Ref. 1; BAC40837." evidence="16" ref="1">
    <original>A</original>
    <variation>T</variation>
    <location>
        <position position="661"/>
    </location>
</feature>
<feature type="sequence conflict" description="In Ref. 5; AAL68447." evidence="16" ref="5">
    <original>G</original>
    <variation>D</variation>
    <location>
        <position position="2127"/>
    </location>
</feature>
<feature type="sequence conflict" description="In Ref. 3; AAH04061/BC038478." evidence="16" ref="3">
    <original>V</original>
    <variation>A</variation>
    <location>
        <position position="2253"/>
    </location>
</feature>
<dbReference type="EMBL" id="AK044856">
    <property type="protein sequence ID" value="BAC32121.1"/>
    <property type="molecule type" value="mRNA"/>
</dbReference>
<dbReference type="EMBL" id="AK089195">
    <property type="protein sequence ID" value="BAC40787.1"/>
    <property type="status" value="ALT_INIT"/>
    <property type="molecule type" value="mRNA"/>
</dbReference>
<dbReference type="EMBL" id="AK089311">
    <property type="protein sequence ID" value="BAC40837.2"/>
    <property type="status" value="ALT_INIT"/>
    <property type="molecule type" value="mRNA"/>
</dbReference>
<dbReference type="EMBL" id="AL807376">
    <property type="protein sequence ID" value="CAT00728.1"/>
    <property type="molecule type" value="Genomic_DNA"/>
</dbReference>
<dbReference type="EMBL" id="BC004061">
    <property type="protein sequence ID" value="AAH04061.1"/>
    <property type="molecule type" value="mRNA"/>
</dbReference>
<dbReference type="EMBL" id="BC038478">
    <property type="status" value="NOT_ANNOTATED_CDS"/>
    <property type="molecule type" value="mRNA"/>
</dbReference>
<dbReference type="EMBL" id="BC054432">
    <property type="protein sequence ID" value="AAH54432.1"/>
    <property type="molecule type" value="mRNA"/>
</dbReference>
<dbReference type="EMBL" id="AF034129">
    <property type="protein sequence ID" value="AAC02062.1"/>
    <property type="molecule type" value="mRNA"/>
</dbReference>
<dbReference type="EMBL" id="AF353668">
    <property type="protein sequence ID" value="AAL68444.1"/>
    <property type="molecule type" value="mRNA"/>
</dbReference>
<dbReference type="EMBL" id="AF353671">
    <property type="protein sequence ID" value="AAL68447.1"/>
    <property type="molecule type" value="mRNA"/>
</dbReference>
<dbReference type="RefSeq" id="NP_001390993.1">
    <molecule id="Q8BTM8-1"/>
    <property type="nucleotide sequence ID" value="NM_001404064.1"/>
</dbReference>
<dbReference type="RefSeq" id="XP_006527974.1">
    <property type="nucleotide sequence ID" value="XM_006527911.3"/>
</dbReference>
<dbReference type="RefSeq" id="XP_036017750.1">
    <molecule id="Q8BTM8-1"/>
    <property type="nucleotide sequence ID" value="XM_036161857.1"/>
</dbReference>
<dbReference type="SMR" id="Q8BTM8"/>
<dbReference type="BioGRID" id="228662">
    <property type="interactions" value="43"/>
</dbReference>
<dbReference type="ComplexPortal" id="CPX-118">
    <property type="entry name" value="Glycoprotein Ib-IX-V-Filamin-A complex"/>
</dbReference>
<dbReference type="ComplexPortal" id="CPX-123">
    <property type="entry name" value="Filamin A homodimer"/>
</dbReference>
<dbReference type="CORUM" id="Q8BTM8"/>
<dbReference type="FunCoup" id="Q8BTM8">
    <property type="interactions" value="1450"/>
</dbReference>
<dbReference type="IntAct" id="Q8BTM8">
    <property type="interactions" value="14"/>
</dbReference>
<dbReference type="MINT" id="Q8BTM8"/>
<dbReference type="STRING" id="10090.ENSMUSP00000109938"/>
<dbReference type="GlyConnect" id="2316">
    <property type="glycosylation" value="1 N-Linked glycan (1 site)"/>
</dbReference>
<dbReference type="GlyCosmos" id="Q8BTM8">
    <property type="glycosylation" value="1 site, 1 glycan"/>
</dbReference>
<dbReference type="GlyGen" id="Q8BTM8">
    <property type="glycosylation" value="7 sites, 4 N-linked glycans (3 sites), 1 O-linked glycan (1 site)"/>
</dbReference>
<dbReference type="iPTMnet" id="Q8BTM8"/>
<dbReference type="PhosphoSitePlus" id="Q8BTM8"/>
<dbReference type="SwissPalm" id="Q8BTM8"/>
<dbReference type="jPOST" id="Q8BTM8"/>
<dbReference type="PaxDb" id="10090-ENSMUSP00000033699"/>
<dbReference type="PeptideAtlas" id="Q8BTM8"/>
<dbReference type="ProteomicsDB" id="267595">
    <molecule id="Q8BTM8-1"/>
</dbReference>
<dbReference type="ProteomicsDB" id="267596">
    <molecule id="Q8BTM8-2"/>
</dbReference>
<dbReference type="Pumba" id="Q8BTM8"/>
<dbReference type="Antibodypedia" id="341">
    <property type="antibodies" value="670 antibodies from 41 providers"/>
</dbReference>
<dbReference type="Ensembl" id="ENSMUST00000033699.13">
    <molecule id="Q8BTM8-1"/>
    <property type="protein sequence ID" value="ENSMUSP00000033699.7"/>
    <property type="gene ID" value="ENSMUSG00000031328.17"/>
</dbReference>
<dbReference type="GeneID" id="192176"/>
<dbReference type="UCSC" id="uc009tnz.1">
    <molecule id="Q8BTM8-1"/>
    <property type="organism name" value="mouse"/>
</dbReference>
<dbReference type="AGR" id="MGI:95556"/>
<dbReference type="MGI" id="MGI:95556">
    <property type="gene designation" value="Flna"/>
</dbReference>
<dbReference type="VEuPathDB" id="HostDB:ENSMUSG00000031328"/>
<dbReference type="eggNOG" id="KOG0518">
    <property type="taxonomic scope" value="Eukaryota"/>
</dbReference>
<dbReference type="GeneTree" id="ENSGT00940000153588"/>
<dbReference type="InParanoid" id="Q8BTM8"/>
<dbReference type="OrthoDB" id="5334309at2759"/>
<dbReference type="PhylomeDB" id="Q8BTM8"/>
<dbReference type="TreeFam" id="TF313685"/>
<dbReference type="Reactome" id="R-MMU-114608">
    <property type="pathway name" value="Platelet degranulation"/>
</dbReference>
<dbReference type="Reactome" id="R-MMU-430116">
    <property type="pathway name" value="GP1b-IX-V activation signalling"/>
</dbReference>
<dbReference type="Reactome" id="R-MMU-446353">
    <property type="pathway name" value="Cell-extracellular matrix interactions"/>
</dbReference>
<dbReference type="Reactome" id="R-MMU-5627123">
    <property type="pathway name" value="RHO GTPases activate PAKs"/>
</dbReference>
<dbReference type="BioGRID-ORCS" id="192176">
    <property type="hits" value="3 hits in 79 CRISPR screens"/>
</dbReference>
<dbReference type="ChiTaRS" id="Flna">
    <property type="organism name" value="mouse"/>
</dbReference>
<dbReference type="PRO" id="PR:Q8BTM8"/>
<dbReference type="Proteomes" id="UP000000589">
    <property type="component" value="Chromosome X"/>
</dbReference>
<dbReference type="RNAct" id="Q8BTM8">
    <property type="molecule type" value="protein"/>
</dbReference>
<dbReference type="Bgee" id="ENSMUSG00000031328">
    <property type="expression patterns" value="Expressed in aorta tunica media and 245 other cell types or tissues"/>
</dbReference>
<dbReference type="ExpressionAtlas" id="Q8BTM8">
    <property type="expression patterns" value="baseline and differential"/>
</dbReference>
<dbReference type="GO" id="GO:0015629">
    <property type="term" value="C:actin cytoskeleton"/>
    <property type="evidence" value="ECO:0000314"/>
    <property type="project" value="WormBase"/>
</dbReference>
<dbReference type="GO" id="GO:0032432">
    <property type="term" value="C:actin filament bundle"/>
    <property type="evidence" value="ECO:0000314"/>
    <property type="project" value="MGI"/>
</dbReference>
<dbReference type="GO" id="GO:0044295">
    <property type="term" value="C:axonal growth cone"/>
    <property type="evidence" value="ECO:0000314"/>
    <property type="project" value="CACAO"/>
</dbReference>
<dbReference type="GO" id="GO:0005903">
    <property type="term" value="C:brush border"/>
    <property type="evidence" value="ECO:0000314"/>
    <property type="project" value="UniProtKB"/>
</dbReference>
<dbReference type="GO" id="GO:0005938">
    <property type="term" value="C:cell cortex"/>
    <property type="evidence" value="ECO:0007669"/>
    <property type="project" value="UniProtKB-SubCell"/>
</dbReference>
<dbReference type="GO" id="GO:0005911">
    <property type="term" value="C:cell-cell junction"/>
    <property type="evidence" value="ECO:0000250"/>
    <property type="project" value="UniProtKB"/>
</dbReference>
<dbReference type="GO" id="GO:0005737">
    <property type="term" value="C:cytoplasm"/>
    <property type="evidence" value="ECO:0000250"/>
    <property type="project" value="UniProtKB"/>
</dbReference>
<dbReference type="GO" id="GO:1990779">
    <property type="term" value="C:glycoprotein Ib-IX-V complex"/>
    <property type="evidence" value="ECO:0000303"/>
    <property type="project" value="ComplexPortal"/>
</dbReference>
<dbReference type="GO" id="GO:0030426">
    <property type="term" value="C:growth cone"/>
    <property type="evidence" value="ECO:0000314"/>
    <property type="project" value="WormBase"/>
</dbReference>
<dbReference type="GO" id="GO:0031523">
    <property type="term" value="C:Myb complex"/>
    <property type="evidence" value="ECO:0000266"/>
    <property type="project" value="MGI"/>
</dbReference>
<dbReference type="GO" id="GO:0005634">
    <property type="term" value="C:nucleus"/>
    <property type="evidence" value="ECO:0000250"/>
    <property type="project" value="UniProtKB"/>
</dbReference>
<dbReference type="GO" id="GO:0043204">
    <property type="term" value="C:perikaryon"/>
    <property type="evidence" value="ECO:0007669"/>
    <property type="project" value="UniProtKB-SubCell"/>
</dbReference>
<dbReference type="GO" id="GO:0005886">
    <property type="term" value="C:plasma membrane"/>
    <property type="evidence" value="ECO:0000250"/>
    <property type="project" value="UniProtKB"/>
</dbReference>
<dbReference type="GO" id="GO:0002102">
    <property type="term" value="C:podosome"/>
    <property type="evidence" value="ECO:0000314"/>
    <property type="project" value="UniProtKB"/>
</dbReference>
<dbReference type="GO" id="GO:0005802">
    <property type="term" value="C:trans-Golgi network"/>
    <property type="evidence" value="ECO:0000314"/>
    <property type="project" value="MGI"/>
</dbReference>
<dbReference type="GO" id="GO:0030018">
    <property type="term" value="C:Z disc"/>
    <property type="evidence" value="ECO:0000314"/>
    <property type="project" value="BHF-UCL"/>
</dbReference>
<dbReference type="GO" id="GO:0003779">
    <property type="term" value="F:actin binding"/>
    <property type="evidence" value="ECO:0000304"/>
    <property type="project" value="MGI"/>
</dbReference>
<dbReference type="GO" id="GO:0051015">
    <property type="term" value="F:actin filament binding"/>
    <property type="evidence" value="ECO:0000250"/>
    <property type="project" value="UniProtKB"/>
</dbReference>
<dbReference type="GO" id="GO:0140297">
    <property type="term" value="F:DNA-binding transcription factor binding"/>
    <property type="evidence" value="ECO:0000250"/>
    <property type="project" value="UniProtKB"/>
</dbReference>
<dbReference type="GO" id="GO:0034988">
    <property type="term" value="F:Fc-gamma receptor I complex binding"/>
    <property type="evidence" value="ECO:0000250"/>
    <property type="project" value="UniProtKB"/>
</dbReference>
<dbReference type="GO" id="GO:0015459">
    <property type="term" value="F:potassium channel regulator activity"/>
    <property type="evidence" value="ECO:0000315"/>
    <property type="project" value="BHF-UCL"/>
</dbReference>
<dbReference type="GO" id="GO:0005080">
    <property type="term" value="F:protein kinase C binding"/>
    <property type="evidence" value="ECO:0000314"/>
    <property type="project" value="MGI"/>
</dbReference>
<dbReference type="GO" id="GO:0140311">
    <property type="term" value="F:protein sequestering activity"/>
    <property type="evidence" value="ECO:0000250"/>
    <property type="project" value="UniProtKB"/>
</dbReference>
<dbReference type="GO" id="GO:0031267">
    <property type="term" value="F:small GTPase binding"/>
    <property type="evidence" value="ECO:0000250"/>
    <property type="project" value="UniProtKB"/>
</dbReference>
<dbReference type="GO" id="GO:0051764">
    <property type="term" value="P:actin crosslink formation"/>
    <property type="evidence" value="ECO:0000250"/>
    <property type="project" value="UniProtKB"/>
</dbReference>
<dbReference type="GO" id="GO:0030036">
    <property type="term" value="P:actin cytoskeleton organization"/>
    <property type="evidence" value="ECO:0000316"/>
    <property type="project" value="MGI"/>
</dbReference>
<dbReference type="GO" id="GO:0007195">
    <property type="term" value="P:adenylate cyclase-inhibiting dopamine receptor signaling pathway"/>
    <property type="evidence" value="ECO:0000250"/>
    <property type="project" value="UniProtKB"/>
</dbReference>
<dbReference type="GO" id="GO:0001525">
    <property type="term" value="P:angiogenesis"/>
    <property type="evidence" value="ECO:0000315"/>
    <property type="project" value="UniProtKB"/>
</dbReference>
<dbReference type="GO" id="GO:0007597">
    <property type="term" value="P:blood coagulation, intrinsic pathway"/>
    <property type="evidence" value="ECO:0000303"/>
    <property type="project" value="ComplexPortal"/>
</dbReference>
<dbReference type="GO" id="GO:0001974">
    <property type="term" value="P:blood vessel remodeling"/>
    <property type="evidence" value="ECO:0000315"/>
    <property type="project" value="UniProtKB"/>
</dbReference>
<dbReference type="GO" id="GO:0030030">
    <property type="term" value="P:cell projection organization"/>
    <property type="evidence" value="ECO:0007669"/>
    <property type="project" value="UniProtKB-KW"/>
</dbReference>
<dbReference type="GO" id="GO:0045216">
    <property type="term" value="P:cell-cell junction organization"/>
    <property type="evidence" value="ECO:0000315"/>
    <property type="project" value="UniProtKB"/>
</dbReference>
<dbReference type="GO" id="GO:0045022">
    <property type="term" value="P:early endosome to late endosome transport"/>
    <property type="evidence" value="ECO:0000314"/>
    <property type="project" value="MGI"/>
</dbReference>
<dbReference type="GO" id="GO:0001837">
    <property type="term" value="P:epithelial to mesenchymal transition"/>
    <property type="evidence" value="ECO:0000316"/>
    <property type="project" value="MGI"/>
</dbReference>
<dbReference type="GO" id="GO:0045184">
    <property type="term" value="P:establishment of protein localization"/>
    <property type="evidence" value="ECO:0000250"/>
    <property type="project" value="UniProtKB"/>
</dbReference>
<dbReference type="GO" id="GO:0003007">
    <property type="term" value="P:heart morphogenesis"/>
    <property type="evidence" value="ECO:0000315"/>
    <property type="project" value="UniProtKB"/>
</dbReference>
<dbReference type="GO" id="GO:0035855">
    <property type="term" value="P:megakaryocyte development"/>
    <property type="evidence" value="ECO:0000303"/>
    <property type="project" value="ComplexPortal"/>
</dbReference>
<dbReference type="GO" id="GO:0090307">
    <property type="term" value="P:mitotic spindle assembly"/>
    <property type="evidence" value="ECO:0000266"/>
    <property type="project" value="MGI"/>
</dbReference>
<dbReference type="GO" id="GO:0043433">
    <property type="term" value="P:negative regulation of DNA-binding transcription factor activity"/>
    <property type="evidence" value="ECO:0000250"/>
    <property type="project" value="UniProtKB"/>
</dbReference>
<dbReference type="GO" id="GO:0010977">
    <property type="term" value="P:negative regulation of neuron projection development"/>
    <property type="evidence" value="ECO:0000316"/>
    <property type="project" value="WormBase"/>
</dbReference>
<dbReference type="GO" id="GO:0042177">
    <property type="term" value="P:negative regulation of protein catabolic process"/>
    <property type="evidence" value="ECO:0000250"/>
    <property type="project" value="UniProtKB"/>
</dbReference>
<dbReference type="GO" id="GO:0048680">
    <property type="term" value="P:positive regulation of axon regeneration"/>
    <property type="evidence" value="ECO:0000315"/>
    <property type="project" value="CACAO"/>
</dbReference>
<dbReference type="GO" id="GO:0043123">
    <property type="term" value="P:positive regulation of canonical NF-kappaB signal transduction"/>
    <property type="evidence" value="ECO:0000250"/>
    <property type="project" value="UniProtKB"/>
</dbReference>
<dbReference type="GO" id="GO:0010572">
    <property type="term" value="P:positive regulation of platelet activation"/>
    <property type="evidence" value="ECO:0000303"/>
    <property type="project" value="ComplexPortal"/>
</dbReference>
<dbReference type="GO" id="GO:1901381">
    <property type="term" value="P:positive regulation of potassium ion transmembrane transport"/>
    <property type="evidence" value="ECO:0000315"/>
    <property type="project" value="BHF-UCL"/>
</dbReference>
<dbReference type="GO" id="GO:0042307">
    <property type="term" value="P:positive regulation of protein import into nucleus"/>
    <property type="evidence" value="ECO:0000250"/>
    <property type="project" value="UniProtKB"/>
</dbReference>
<dbReference type="GO" id="GO:0034394">
    <property type="term" value="P:protein localization to cell surface"/>
    <property type="evidence" value="ECO:0000250"/>
    <property type="project" value="UniProtKB"/>
</dbReference>
<dbReference type="GO" id="GO:0072659">
    <property type="term" value="P:protein localization to plasma membrane"/>
    <property type="evidence" value="ECO:0000315"/>
    <property type="project" value="BHF-UCL"/>
</dbReference>
<dbReference type="GO" id="GO:0050821">
    <property type="term" value="P:protein stabilization"/>
    <property type="evidence" value="ECO:0000250"/>
    <property type="project" value="UniProtKB"/>
</dbReference>
<dbReference type="GO" id="GO:0043113">
    <property type="term" value="P:receptor clustering"/>
    <property type="evidence" value="ECO:0000250"/>
    <property type="project" value="UniProtKB"/>
</dbReference>
<dbReference type="GO" id="GO:0032231">
    <property type="term" value="P:regulation of actin filament bundle assembly"/>
    <property type="evidence" value="ECO:0000315"/>
    <property type="project" value="UniProtKB"/>
</dbReference>
<dbReference type="GO" id="GO:0030334">
    <property type="term" value="P:regulation of cell migration"/>
    <property type="evidence" value="ECO:0000250"/>
    <property type="project" value="UniProtKB"/>
</dbReference>
<dbReference type="GO" id="GO:1905000">
    <property type="term" value="P:regulation of membrane repolarization during atrial cardiac muscle cell action potential"/>
    <property type="evidence" value="ECO:0000305"/>
    <property type="project" value="BHF-UCL"/>
</dbReference>
<dbReference type="GO" id="GO:1905031">
    <property type="term" value="P:regulation of membrane repolarization during cardiac muscle cell action potential"/>
    <property type="evidence" value="ECO:0000315"/>
    <property type="project" value="BHF-UCL"/>
</dbReference>
<dbReference type="GO" id="GO:0051209">
    <property type="term" value="P:release of sequestered calcium ion into cytosol"/>
    <property type="evidence" value="ECO:0000303"/>
    <property type="project" value="ComplexPortal"/>
</dbReference>
<dbReference type="GO" id="GO:0071526">
    <property type="term" value="P:semaphorin-plexin signaling pathway"/>
    <property type="evidence" value="ECO:0000316"/>
    <property type="project" value="WormBase"/>
</dbReference>
<dbReference type="GO" id="GO:0050808">
    <property type="term" value="P:synapse organization"/>
    <property type="evidence" value="ECO:0000314"/>
    <property type="project" value="SynGO"/>
</dbReference>
<dbReference type="GO" id="GO:0044319">
    <property type="term" value="P:wound healing, spreading of cells"/>
    <property type="evidence" value="ECO:0000250"/>
    <property type="project" value="UniProtKB"/>
</dbReference>
<dbReference type="CDD" id="cd21308">
    <property type="entry name" value="CH_FLNA_rpt1"/>
    <property type="match status" value="1"/>
</dbReference>
<dbReference type="CDD" id="cd21312">
    <property type="entry name" value="CH_FLNA_rpt2"/>
    <property type="match status" value="1"/>
</dbReference>
<dbReference type="FunFam" id="1.10.418.10:FF:000006">
    <property type="entry name" value="Filamin-B isoform A"/>
    <property type="match status" value="1"/>
</dbReference>
<dbReference type="FunFam" id="2.60.40.10:FF:000042">
    <property type="entry name" value="Filamin-B isoform B"/>
    <property type="match status" value="2"/>
</dbReference>
<dbReference type="FunFam" id="2.60.40.10:FF:000092">
    <property type="entry name" value="Filamin-B isoform B"/>
    <property type="match status" value="1"/>
</dbReference>
<dbReference type="FunFam" id="1.10.418.10:FF:000008">
    <property type="entry name" value="Filamin-B isoform C"/>
    <property type="match status" value="1"/>
</dbReference>
<dbReference type="FunFam" id="2.60.40.10:FF:000007">
    <property type="entry name" value="Filamin-B isoform C"/>
    <property type="match status" value="3"/>
</dbReference>
<dbReference type="FunFam" id="2.60.40.10:FF:000079">
    <property type="entry name" value="Filamin-B isoform C"/>
    <property type="match status" value="1"/>
</dbReference>
<dbReference type="FunFam" id="2.60.40.10:FF:000125">
    <property type="entry name" value="filamin-B isoform X1"/>
    <property type="match status" value="1"/>
</dbReference>
<dbReference type="FunFam" id="2.60.40.10:FF:000138">
    <property type="entry name" value="filamin-B isoform X1"/>
    <property type="match status" value="1"/>
</dbReference>
<dbReference type="FunFam" id="2.60.40.10:FF:000154">
    <property type="entry name" value="filamin-B isoform X1"/>
    <property type="match status" value="1"/>
</dbReference>
<dbReference type="FunFam" id="2.60.40.10:FF:000102">
    <property type="entry name" value="filamin-B isoform X2"/>
    <property type="match status" value="1"/>
</dbReference>
<dbReference type="FunFam" id="2.60.40.10:FF:000001">
    <property type="entry name" value="Filamin-C isoform b"/>
    <property type="match status" value="5"/>
</dbReference>
<dbReference type="FunFam" id="2.60.40.10:FF:000105">
    <property type="entry name" value="filamin-C isoform X1"/>
    <property type="match status" value="1"/>
</dbReference>
<dbReference type="FunFam" id="2.60.40.10:FF:000115">
    <property type="entry name" value="filamin-C isoform X1"/>
    <property type="match status" value="1"/>
</dbReference>
<dbReference type="FunFam" id="2.60.40.10:FF:000126">
    <property type="entry name" value="filamin-C isoform X1"/>
    <property type="match status" value="1"/>
</dbReference>
<dbReference type="FunFam" id="2.60.40.10:FF:000157">
    <property type="entry name" value="filamin-C isoform X1"/>
    <property type="match status" value="1"/>
</dbReference>
<dbReference type="FunFam" id="2.60.40.10:FF:000096">
    <property type="entry name" value="filamin-C isoform X2"/>
    <property type="match status" value="1"/>
</dbReference>
<dbReference type="FunFam" id="2.60.40.10:FF:000118">
    <property type="entry name" value="filamin-C isoform X2"/>
    <property type="match status" value="1"/>
</dbReference>
<dbReference type="FunFam" id="2.60.40.10:FF:000122">
    <property type="entry name" value="filamin-C isoform X2"/>
    <property type="match status" value="1"/>
</dbReference>
<dbReference type="FunFam" id="2.60.40.10:FF:000168">
    <property type="entry name" value="filamin-C isoform X2"/>
    <property type="match status" value="1"/>
</dbReference>
<dbReference type="Gene3D" id="1.10.418.10">
    <property type="entry name" value="Calponin-like domain"/>
    <property type="match status" value="2"/>
</dbReference>
<dbReference type="Gene3D" id="2.60.40.10">
    <property type="entry name" value="Immunoglobulins"/>
    <property type="match status" value="24"/>
</dbReference>
<dbReference type="InterPro" id="IPR001589">
    <property type="entry name" value="Actinin_actin-bd_CS"/>
</dbReference>
<dbReference type="InterPro" id="IPR001715">
    <property type="entry name" value="CH_dom"/>
</dbReference>
<dbReference type="InterPro" id="IPR036872">
    <property type="entry name" value="CH_dom_sf"/>
</dbReference>
<dbReference type="InterPro" id="IPR044801">
    <property type="entry name" value="Filamin"/>
</dbReference>
<dbReference type="InterPro" id="IPR017868">
    <property type="entry name" value="Filamin/ABP280_repeat-like"/>
</dbReference>
<dbReference type="InterPro" id="IPR001298">
    <property type="entry name" value="Filamin/ABP280_rpt"/>
</dbReference>
<dbReference type="InterPro" id="IPR013783">
    <property type="entry name" value="Ig-like_fold"/>
</dbReference>
<dbReference type="InterPro" id="IPR014756">
    <property type="entry name" value="Ig_E-set"/>
</dbReference>
<dbReference type="PANTHER" id="PTHR38537:SF8">
    <property type="entry name" value="FILAMIN-A"/>
    <property type="match status" value="1"/>
</dbReference>
<dbReference type="PANTHER" id="PTHR38537">
    <property type="entry name" value="JITTERBUG, ISOFORM N"/>
    <property type="match status" value="1"/>
</dbReference>
<dbReference type="Pfam" id="PF00307">
    <property type="entry name" value="CH"/>
    <property type="match status" value="2"/>
</dbReference>
<dbReference type="Pfam" id="PF00630">
    <property type="entry name" value="Filamin"/>
    <property type="match status" value="24"/>
</dbReference>
<dbReference type="SMART" id="SM00033">
    <property type="entry name" value="CH"/>
    <property type="match status" value="2"/>
</dbReference>
<dbReference type="SMART" id="SM00557">
    <property type="entry name" value="IG_FLMN"/>
    <property type="match status" value="24"/>
</dbReference>
<dbReference type="SUPFAM" id="SSF47576">
    <property type="entry name" value="Calponin-homology domain, CH-domain"/>
    <property type="match status" value="1"/>
</dbReference>
<dbReference type="SUPFAM" id="SSF81296">
    <property type="entry name" value="E set domains"/>
    <property type="match status" value="24"/>
</dbReference>
<dbReference type="PROSITE" id="PS00019">
    <property type="entry name" value="ACTININ_1"/>
    <property type="match status" value="1"/>
</dbReference>
<dbReference type="PROSITE" id="PS00020">
    <property type="entry name" value="ACTININ_2"/>
    <property type="match status" value="1"/>
</dbReference>
<dbReference type="PROSITE" id="PS50021">
    <property type="entry name" value="CH"/>
    <property type="match status" value="2"/>
</dbReference>
<dbReference type="PROSITE" id="PS50194">
    <property type="entry name" value="FILAMIN_REPEAT"/>
    <property type="match status" value="24"/>
</dbReference>
<organism>
    <name type="scientific">Mus musculus</name>
    <name type="common">Mouse</name>
    <dbReference type="NCBI Taxonomy" id="10090"/>
    <lineage>
        <taxon>Eukaryota</taxon>
        <taxon>Metazoa</taxon>
        <taxon>Chordata</taxon>
        <taxon>Craniata</taxon>
        <taxon>Vertebrata</taxon>
        <taxon>Euteleostomi</taxon>
        <taxon>Mammalia</taxon>
        <taxon>Eutheria</taxon>
        <taxon>Euarchontoglires</taxon>
        <taxon>Glires</taxon>
        <taxon>Rodentia</taxon>
        <taxon>Myomorpha</taxon>
        <taxon>Muroidea</taxon>
        <taxon>Muridae</taxon>
        <taxon>Murinae</taxon>
        <taxon>Mus</taxon>
        <taxon>Mus</taxon>
    </lineage>
</organism>
<keyword id="KW-0007">Acetylation</keyword>
<keyword id="KW-0009">Actin-binding</keyword>
<keyword id="KW-0025">Alternative splicing</keyword>
<keyword id="KW-0965">Cell junction</keyword>
<keyword id="KW-0966">Cell projection</keyword>
<keyword id="KW-0970">Cilium biogenesis/degradation</keyword>
<keyword id="KW-0963">Cytoplasm</keyword>
<keyword id="KW-0206">Cytoskeleton</keyword>
<keyword id="KW-1017">Isopeptide bond</keyword>
<keyword id="KW-0597">Phosphoprotein</keyword>
<keyword id="KW-1185">Reference proteome</keyword>
<keyword id="KW-0677">Repeat</keyword>
<keyword id="KW-0832">Ubl conjugation</keyword>
<gene>
    <name type="primary">Flna</name>
    <name type="synonym">Fln</name>
    <name type="synonym">Fln1</name>
</gene>
<reference key="1">
    <citation type="journal article" date="2005" name="Science">
        <title>The transcriptional landscape of the mammalian genome.</title>
        <authorList>
            <person name="Carninci P."/>
            <person name="Kasukawa T."/>
            <person name="Katayama S."/>
            <person name="Gough J."/>
            <person name="Frith M.C."/>
            <person name="Maeda N."/>
            <person name="Oyama R."/>
            <person name="Ravasi T."/>
            <person name="Lenhard B."/>
            <person name="Wells C."/>
            <person name="Kodzius R."/>
            <person name="Shimokawa K."/>
            <person name="Bajic V.B."/>
            <person name="Brenner S.E."/>
            <person name="Batalov S."/>
            <person name="Forrest A.R."/>
            <person name="Zavolan M."/>
            <person name="Davis M.J."/>
            <person name="Wilming L.G."/>
            <person name="Aidinis V."/>
            <person name="Allen J.E."/>
            <person name="Ambesi-Impiombato A."/>
            <person name="Apweiler R."/>
            <person name="Aturaliya R.N."/>
            <person name="Bailey T.L."/>
            <person name="Bansal M."/>
            <person name="Baxter L."/>
            <person name="Beisel K.W."/>
            <person name="Bersano T."/>
            <person name="Bono H."/>
            <person name="Chalk A.M."/>
            <person name="Chiu K.P."/>
            <person name="Choudhary V."/>
            <person name="Christoffels A."/>
            <person name="Clutterbuck D.R."/>
            <person name="Crowe M.L."/>
            <person name="Dalla E."/>
            <person name="Dalrymple B.P."/>
            <person name="de Bono B."/>
            <person name="Della Gatta G."/>
            <person name="di Bernardo D."/>
            <person name="Down T."/>
            <person name="Engstrom P."/>
            <person name="Fagiolini M."/>
            <person name="Faulkner G."/>
            <person name="Fletcher C.F."/>
            <person name="Fukushima T."/>
            <person name="Furuno M."/>
            <person name="Futaki S."/>
            <person name="Gariboldi M."/>
            <person name="Georgii-Hemming P."/>
            <person name="Gingeras T.R."/>
            <person name="Gojobori T."/>
            <person name="Green R.E."/>
            <person name="Gustincich S."/>
            <person name="Harbers M."/>
            <person name="Hayashi Y."/>
            <person name="Hensch T.K."/>
            <person name="Hirokawa N."/>
            <person name="Hill D."/>
            <person name="Huminiecki L."/>
            <person name="Iacono M."/>
            <person name="Ikeo K."/>
            <person name="Iwama A."/>
            <person name="Ishikawa T."/>
            <person name="Jakt M."/>
            <person name="Kanapin A."/>
            <person name="Katoh M."/>
            <person name="Kawasawa Y."/>
            <person name="Kelso J."/>
            <person name="Kitamura H."/>
            <person name="Kitano H."/>
            <person name="Kollias G."/>
            <person name="Krishnan S.P."/>
            <person name="Kruger A."/>
            <person name="Kummerfeld S.K."/>
            <person name="Kurochkin I.V."/>
            <person name="Lareau L.F."/>
            <person name="Lazarevic D."/>
            <person name="Lipovich L."/>
            <person name="Liu J."/>
            <person name="Liuni S."/>
            <person name="McWilliam S."/>
            <person name="Madan Babu M."/>
            <person name="Madera M."/>
            <person name="Marchionni L."/>
            <person name="Matsuda H."/>
            <person name="Matsuzawa S."/>
            <person name="Miki H."/>
            <person name="Mignone F."/>
            <person name="Miyake S."/>
            <person name="Morris K."/>
            <person name="Mottagui-Tabar S."/>
            <person name="Mulder N."/>
            <person name="Nakano N."/>
            <person name="Nakauchi H."/>
            <person name="Ng P."/>
            <person name="Nilsson R."/>
            <person name="Nishiguchi S."/>
            <person name="Nishikawa S."/>
            <person name="Nori F."/>
            <person name="Ohara O."/>
            <person name="Okazaki Y."/>
            <person name="Orlando V."/>
            <person name="Pang K.C."/>
            <person name="Pavan W.J."/>
            <person name="Pavesi G."/>
            <person name="Pesole G."/>
            <person name="Petrovsky N."/>
            <person name="Piazza S."/>
            <person name="Reed J."/>
            <person name="Reid J.F."/>
            <person name="Ring B.Z."/>
            <person name="Ringwald M."/>
            <person name="Rost B."/>
            <person name="Ruan Y."/>
            <person name="Salzberg S.L."/>
            <person name="Sandelin A."/>
            <person name="Schneider C."/>
            <person name="Schoenbach C."/>
            <person name="Sekiguchi K."/>
            <person name="Semple C.A."/>
            <person name="Seno S."/>
            <person name="Sessa L."/>
            <person name="Sheng Y."/>
            <person name="Shibata Y."/>
            <person name="Shimada H."/>
            <person name="Shimada K."/>
            <person name="Silva D."/>
            <person name="Sinclair B."/>
            <person name="Sperling S."/>
            <person name="Stupka E."/>
            <person name="Sugiura K."/>
            <person name="Sultana R."/>
            <person name="Takenaka Y."/>
            <person name="Taki K."/>
            <person name="Tammoja K."/>
            <person name="Tan S.L."/>
            <person name="Tang S."/>
            <person name="Taylor M.S."/>
            <person name="Tegner J."/>
            <person name="Teichmann S.A."/>
            <person name="Ueda H.R."/>
            <person name="van Nimwegen E."/>
            <person name="Verardo R."/>
            <person name="Wei C.L."/>
            <person name="Yagi K."/>
            <person name="Yamanishi H."/>
            <person name="Zabarovsky E."/>
            <person name="Zhu S."/>
            <person name="Zimmer A."/>
            <person name="Hide W."/>
            <person name="Bult C."/>
            <person name="Grimmond S.M."/>
            <person name="Teasdale R.D."/>
            <person name="Liu E.T."/>
            <person name="Brusic V."/>
            <person name="Quackenbush J."/>
            <person name="Wahlestedt C."/>
            <person name="Mattick J.S."/>
            <person name="Hume D.A."/>
            <person name="Kai C."/>
            <person name="Sasaki D."/>
            <person name="Tomaru Y."/>
            <person name="Fukuda S."/>
            <person name="Kanamori-Katayama M."/>
            <person name="Suzuki M."/>
            <person name="Aoki J."/>
            <person name="Arakawa T."/>
            <person name="Iida J."/>
            <person name="Imamura K."/>
            <person name="Itoh M."/>
            <person name="Kato T."/>
            <person name="Kawaji H."/>
            <person name="Kawagashira N."/>
            <person name="Kawashima T."/>
            <person name="Kojima M."/>
            <person name="Kondo S."/>
            <person name="Konno H."/>
            <person name="Nakano K."/>
            <person name="Ninomiya N."/>
            <person name="Nishio T."/>
            <person name="Okada M."/>
            <person name="Plessy C."/>
            <person name="Shibata K."/>
            <person name="Shiraki T."/>
            <person name="Suzuki S."/>
            <person name="Tagami M."/>
            <person name="Waki K."/>
            <person name="Watahiki A."/>
            <person name="Okamura-Oho Y."/>
            <person name="Suzuki H."/>
            <person name="Kawai J."/>
            <person name="Hayashizaki Y."/>
        </authorList>
    </citation>
    <scope>NUCLEOTIDE SEQUENCE [LARGE SCALE MRNA] (ISOFORM 2)</scope>
    <scope>NUCLEOTIDE SEQUENCE [LARGE SCALE MRNA] OF 9-1253 (ISOFORM 1)</scope>
    <source>
        <strain>C57BL/6J</strain>
        <strain>NOD</strain>
        <tissue>Embryo</tissue>
    </source>
</reference>
<reference key="2">
    <citation type="journal article" date="2009" name="PLoS Biol.">
        <title>Lineage-specific biology revealed by a finished genome assembly of the mouse.</title>
        <authorList>
            <person name="Church D.M."/>
            <person name="Goodstadt L."/>
            <person name="Hillier L.W."/>
            <person name="Zody M.C."/>
            <person name="Goldstein S."/>
            <person name="She X."/>
            <person name="Bult C.J."/>
            <person name="Agarwala R."/>
            <person name="Cherry J.L."/>
            <person name="DiCuccio M."/>
            <person name="Hlavina W."/>
            <person name="Kapustin Y."/>
            <person name="Meric P."/>
            <person name="Maglott D."/>
            <person name="Birtle Z."/>
            <person name="Marques A.C."/>
            <person name="Graves T."/>
            <person name="Zhou S."/>
            <person name="Teague B."/>
            <person name="Potamousis K."/>
            <person name="Churas C."/>
            <person name="Place M."/>
            <person name="Herschleb J."/>
            <person name="Runnheim R."/>
            <person name="Forrest D."/>
            <person name="Amos-Landgraf J."/>
            <person name="Schwartz D.C."/>
            <person name="Cheng Z."/>
            <person name="Lindblad-Toh K."/>
            <person name="Eichler E.E."/>
            <person name="Ponting C.P."/>
        </authorList>
    </citation>
    <scope>NUCLEOTIDE SEQUENCE [LARGE SCALE GENOMIC DNA]</scope>
    <source>
        <strain>C57BL/6J</strain>
    </source>
</reference>
<reference key="3">
    <citation type="journal article" date="2004" name="Genome Res.">
        <title>The status, quality, and expansion of the NIH full-length cDNA project: the Mammalian Gene Collection (MGC).</title>
        <authorList>
            <consortium name="The MGC Project Team"/>
        </authorList>
    </citation>
    <scope>NUCLEOTIDE SEQUENCE [LARGE SCALE MRNA] OF 14-2647 (ISOFORM 1)</scope>
    <source>
        <tissue>Eye</tissue>
        <tissue>Mammary tumor</tissue>
    </source>
</reference>
<reference key="4">
    <citation type="journal article" date="1997" name="J. Cell Biol.">
        <title>Cytoskeletal protein ABP-280 directs the intracellular trafficking of furin and modulates proprotein processing in the endocytic pathway.</title>
        <authorList>
            <person name="Liu G."/>
            <person name="Thomas L."/>
            <person name="Warren R.A."/>
            <person name="Enns C.A."/>
            <person name="Cunningham C.C."/>
            <person name="Hartwig J.H."/>
            <person name="Thomas G."/>
        </authorList>
    </citation>
    <scope>NUCLEOTIDE SEQUENCE [MRNA] OF 1490-1607 (ISOFORM 1)</scope>
    <scope>FUNCTION</scope>
    <scope>INTERACTION WITH FURIN</scope>
</reference>
<reference key="5">
    <citation type="journal article" date="2002" name="J. Cell Biol.">
        <title>Different splice variants of filamin-B affect myogenesis, subcellular distribution, and determine binding to integrin (beta) subunits.</title>
        <authorList>
            <person name="van Der Flier A."/>
            <person name="Kuikman I."/>
            <person name="Kramer D."/>
            <person name="Geerts D."/>
            <person name="Kreft M."/>
            <person name="Takafuta T."/>
            <person name="Shapiro S.S."/>
            <person name="Sonnenberg A."/>
        </authorList>
    </citation>
    <scope>NUCLEOTIDE SEQUENCE [MRNA] OF 1691-1805 AND 2076-2226 (ISOFORM 1)</scope>
    <scope>DEVELOPMENTAL STAGE</scope>
    <source>
        <strain>C3H/HeJ</strain>
    </source>
</reference>
<reference key="6">
    <citation type="journal article" date="2006" name="Proc. Natl. Acad. Sci. U.S.A.">
        <title>Filamin A (FLNA) is required for cell-cell contact in vascular development and cardiac morphogenesis.</title>
        <authorList>
            <person name="Feng Y."/>
            <person name="Chen M.H."/>
            <person name="Moskowitz I.P."/>
            <person name="Mendonza A.M."/>
            <person name="Vidali L."/>
            <person name="Nakamura F."/>
            <person name="Kwiatkowski D.J."/>
            <person name="Walsh C.A."/>
        </authorList>
    </citation>
    <scope>DISRUPTION PHENOTYPE</scope>
    <scope>FUNCTION</scope>
</reference>
<reference key="7">
    <citation type="journal article" date="2007" name="Proc. Natl. Acad. Sci. U.S.A.">
        <title>Large-scale phosphorylation analysis of mouse liver.</title>
        <authorList>
            <person name="Villen J."/>
            <person name="Beausoleil S.A."/>
            <person name="Gerber S.A."/>
            <person name="Gygi S.P."/>
        </authorList>
    </citation>
    <scope>PHOSPHORYLATION [LARGE SCALE ANALYSIS] AT SER-1459</scope>
    <scope>IDENTIFICATION BY MASS SPECTROMETRY [LARGE SCALE ANALYSIS]</scope>
    <source>
        <tissue>Liver</tissue>
    </source>
</reference>
<reference key="8">
    <citation type="journal article" date="2009" name="Immunity">
        <title>The phagosomal proteome in interferon-gamma-activated macrophages.</title>
        <authorList>
            <person name="Trost M."/>
            <person name="English L."/>
            <person name="Lemieux S."/>
            <person name="Courcelles M."/>
            <person name="Desjardins M."/>
            <person name="Thibault P."/>
        </authorList>
    </citation>
    <scope>PHOSPHORYLATION [LARGE SCALE ANALYSIS] AT SER-2152</scope>
    <scope>IDENTIFICATION BY MASS SPECTROMETRY [LARGE SCALE ANALYSIS]</scope>
</reference>
<reference key="9">
    <citation type="journal article" date="2009" name="Mol. Cell. Proteomics">
        <title>Large scale localization of protein phosphorylation by use of electron capture dissociation mass spectrometry.</title>
        <authorList>
            <person name="Sweet S.M."/>
            <person name="Bailey C.M."/>
            <person name="Cunningham D.L."/>
            <person name="Heath J.K."/>
            <person name="Cooper H.J."/>
        </authorList>
    </citation>
    <scope>PHOSPHORYLATION [LARGE SCALE ANALYSIS] AT SER-1459 AND THR-1750</scope>
    <scope>IDENTIFICATION BY MASS SPECTROMETRY [LARGE SCALE ANALYSIS]</scope>
    <source>
        <tissue>Embryonic fibroblast</tissue>
    </source>
</reference>
<reference key="10">
    <citation type="journal article" date="2010" name="Cell">
        <title>A tissue-specific atlas of mouse protein phosphorylation and expression.</title>
        <authorList>
            <person name="Huttlin E.L."/>
            <person name="Jedrychowski M.P."/>
            <person name="Elias J.E."/>
            <person name="Goswami T."/>
            <person name="Rad R."/>
            <person name="Beausoleil S.A."/>
            <person name="Villen J."/>
            <person name="Haas W."/>
            <person name="Sowa M.E."/>
            <person name="Gygi S.P."/>
        </authorList>
    </citation>
    <scope>PHOSPHORYLATION [LARGE SCALE ANALYSIS] AT SER-16; SER-20; SER-968; SER-1459; THR-1750; SER-2152; SER-2180; SER-2329; THR-2336; SER-2370; SER-2523; SER-2526 AND THR-2599</scope>
    <scope>IDENTIFICATION BY MASS SPECTROMETRY [LARGE SCALE ANALYSIS]</scope>
    <source>
        <tissue>Brain</tissue>
        <tissue>Brown adipose tissue</tissue>
        <tissue>Heart</tissue>
        <tissue>Kidney</tissue>
        <tissue>Liver</tissue>
        <tissue>Lung</tissue>
        <tissue>Pancreas</tissue>
        <tissue>Spleen</tissue>
        <tissue>Testis</tissue>
    </source>
</reference>
<reference key="11">
    <citation type="journal article" date="2010" name="J. Exp. Med.">
        <title>A novel interaction between FlnA and Syk regulates platelet ITAM-mediated receptor signaling and function.</title>
        <authorList>
            <person name="Falet H."/>
            <person name="Pollitt A.Y."/>
            <person name="Begonja A.J."/>
            <person name="Weber S.E."/>
            <person name="Duerschmied D."/>
            <person name="Wagner D.D."/>
            <person name="Watson S.P."/>
            <person name="Hartwig J.H."/>
        </authorList>
    </citation>
    <scope>DISRUPTION PHENOTYPE</scope>
    <scope>FUNCTION</scope>
</reference>
<reference key="12">
    <citation type="journal article" date="2011" name="Proc. Natl. Acad. Sci. U.S.A.">
        <title>RefilinB (FAM101B) targets filamin A to organize perinuclear actin networks and regulates nuclear shape.</title>
        <authorList>
            <person name="Gay O."/>
            <person name="Gilquin B."/>
            <person name="Nakamura F."/>
            <person name="Jenkins Z.A."/>
            <person name="McCartney R."/>
            <person name="Krakow D."/>
            <person name="Deshiere A."/>
            <person name="Assard N."/>
            <person name="Hartwig J.H."/>
            <person name="Robertson S.P."/>
            <person name="Baudier J."/>
        </authorList>
    </citation>
    <scope>INTERACTION WITH RFLNA AND RFLNB</scope>
</reference>
<reference key="13">
    <citation type="journal article" date="2012" name="Hum. Mol. Genet.">
        <title>A meckelin-filamin A interaction mediates ciliogenesis.</title>
        <authorList>
            <person name="Adams M."/>
            <person name="Simms R.J."/>
            <person name="Abdelhamed Z."/>
            <person name="Dawe H.R."/>
            <person name="Szymanska K."/>
            <person name="Logan C.V."/>
            <person name="Wheway G."/>
            <person name="Pitt E."/>
            <person name="Gull K."/>
            <person name="Knowles M.A."/>
            <person name="Blair E."/>
            <person name="Cross S.H."/>
            <person name="Sayer J.A."/>
            <person name="Johnson C.A."/>
        </authorList>
    </citation>
    <scope>FUNCTION IN CILIOGENESIS</scope>
</reference>
<reference key="14">
    <citation type="journal article" date="2013" name="Genes Cells">
        <title>Junctional Rab13-binding protein (JRAB) regulates cell spreading via filamins.</title>
        <authorList>
            <person name="Sakane A."/>
            <person name="Alamir Mahmoud Abdallah A."/>
            <person name="Nakano K."/>
            <person name="Honda K."/>
            <person name="Kitamura T."/>
            <person name="Imoto I."/>
            <person name="Matsushita N."/>
            <person name="Sasaki T."/>
        </authorList>
    </citation>
    <scope>INTERACTION WITH MICALL2</scope>
</reference>
<reference key="15">
    <citation type="journal article" date="2013" name="J. Cell Sci.">
        <title>Amotl2 interacts with LL5beta, localizes to podosomes and regulates postsynaptic differentiation in muscle.</title>
        <authorList>
            <person name="Proszynski T.J."/>
            <person name="Sanes J.R."/>
        </authorList>
    </citation>
    <scope>SUBCELLULAR LOCATION</scope>
</reference>
<reference key="16">
    <citation type="journal article" date="2013" name="Mol. Cell">
        <title>SIRT5-mediated lysine desuccinylation impacts diverse metabolic pathways.</title>
        <authorList>
            <person name="Park J."/>
            <person name="Chen Y."/>
            <person name="Tishkoff D.X."/>
            <person name="Peng C."/>
            <person name="Tan M."/>
            <person name="Dai L."/>
            <person name="Xie Z."/>
            <person name="Zhang Y."/>
            <person name="Zwaans B.M."/>
            <person name="Skinner M.E."/>
            <person name="Lombard D.B."/>
            <person name="Zhao Y."/>
        </authorList>
    </citation>
    <scope>ACETYLATION [LARGE SCALE ANALYSIS] AT LYS-376; LYS-700; LYS-865; LYS-906; LYS-1071; LYS-1372; LYS-1538; LYS-2569 AND LYS-2575</scope>
    <scope>SUCCINYLATION [LARGE SCALE ANALYSIS] AT LYS-1071 AND LYS-2569</scope>
    <scope>IDENTIFICATION BY MASS SPECTROMETRY [LARGE SCALE ANALYSIS]</scope>
    <source>
        <tissue>Embryonic fibroblast</tissue>
    </source>
</reference>
<reference key="17">
    <citation type="journal article" date="2014" name="Hum. Mol. Genet.">
        <title>Filamin-interacting proteins, Cfm1 and Cfm2, are essential for the formation of cartilaginous skeletal elements.</title>
        <authorList>
            <person name="Mizuhashi K."/>
            <person name="Kanamoto T."/>
            <person name="Moriishi T."/>
            <person name="Muranishi Y."/>
            <person name="Miyazaki T."/>
            <person name="Terada K."/>
            <person name="Omori Y."/>
            <person name="Ito M."/>
            <person name="Komori T."/>
            <person name="Furukawa T."/>
        </authorList>
    </citation>
    <scope>INTERACTION WITH RFLNA AND RFLNB</scope>
</reference>
<reference key="18">
    <citation type="journal article" date="2014" name="Nat. Commun.">
        <title>Amino- and carboxyl-terminal domains of Filamin-A interact with CRMP1 to mediate Sema3A signalling.</title>
        <authorList>
            <person name="Nakamura F."/>
            <person name="Kumeta K."/>
            <person name="Hida T."/>
            <person name="Isono T."/>
            <person name="Nakayama Y."/>
            <person name="Kuramata-Matsuoka E."/>
            <person name="Yamashita N."/>
            <person name="Uchida Y."/>
            <person name="Ogura K."/>
            <person name="Gengyo-Ando K."/>
            <person name="Mitani S."/>
            <person name="Ogino T."/>
            <person name="Goshima Y."/>
        </authorList>
    </citation>
    <scope>FUNCTION</scope>
    <scope>SUBCELLULAR LOCATION</scope>
    <scope>DEVELOPMENTAL STAGE</scope>
</reference>
<evidence type="ECO:0000250" key="1"/>
<evidence type="ECO:0000250" key="2">
    <source>
        <dbReference type="UniProtKB" id="P21333"/>
    </source>
</evidence>
<evidence type="ECO:0000255" key="3">
    <source>
        <dbReference type="PROSITE-ProRule" id="PRU00044"/>
    </source>
</evidence>
<evidence type="ECO:0000256" key="4">
    <source>
        <dbReference type="SAM" id="MobiDB-lite"/>
    </source>
</evidence>
<evidence type="ECO:0000269" key="5">
    <source>
    </source>
</evidence>
<evidence type="ECO:0000269" key="6">
    <source>
    </source>
</evidence>
<evidence type="ECO:0000269" key="7">
    <source>
    </source>
</evidence>
<evidence type="ECO:0000269" key="8">
    <source>
    </source>
</evidence>
<evidence type="ECO:0000269" key="9">
    <source>
    </source>
</evidence>
<evidence type="ECO:0000269" key="10">
    <source>
    </source>
</evidence>
<evidence type="ECO:0000269" key="11">
    <source>
    </source>
</evidence>
<evidence type="ECO:0000269" key="12">
    <source>
    </source>
</evidence>
<evidence type="ECO:0000269" key="13">
    <source>
    </source>
</evidence>
<evidence type="ECO:0000269" key="14">
    <source>
    </source>
</evidence>
<evidence type="ECO:0000303" key="15">
    <source>
    </source>
</evidence>
<evidence type="ECO:0000305" key="16"/>
<evidence type="ECO:0007744" key="17">
    <source>
    </source>
</evidence>
<evidence type="ECO:0007744" key="18">
    <source>
    </source>
</evidence>
<evidence type="ECO:0007744" key="19">
    <source>
    </source>
</evidence>
<evidence type="ECO:0007744" key="20">
    <source>
    </source>
</evidence>
<evidence type="ECO:0007744" key="21">
    <source>
    </source>
</evidence>
<sequence length="2647" mass="281222">MSSSHSRCGQSAAVASPGGSIDSRDAEMPATEKDLAEDAPWKKIQQNTFTRWCNEHLKCVSKRIANLQTDLSDGLRLIALLEVLSQKKMHRKHNQRPTFRQMQLENVSVALEFLDRESIKLVSIDSKAIVDGNLKLILGLIWTLILHYSISMPMWDEEEDEEAKKQTPKQRLLGWIQNKLPQLPITNFSRDWQSGRALGALVDSCAPGLCPDWDSWDASKPVNNAREAMQQADDWLGIPQVITPEEIVDPNVDEHSVMTYLSQFPKAKLKPGAPLRPKLNPKKARAYGPGIEPTGNMVKKRAEFTVETRSAGQGEVLVYVEDPAGHQEEAKVTANNDKNRTFSVWYVPEVTGTHKVTVLFAGQHIAKSPFEVYVDKSQGDASKVTAQGPGLEPSGNIANKTTYFEIFTAGAGMGEVEVVIQDPTGQKGTVEPQLEARGDSTYRCSYQPTMEGVHTVHVTFAGVPIPRSPYTVTVGQACNPAACRAIGRGLQPKGVRVKETADFKVYTKGAGSGELKVTVKGPKGEERVKQKDLGDGVYGFEYYPTIPGTYTVTITWGGQNIGRSPFEVKVGTECGNQKVRAWGPGLEGGIVGKSADFVVEAIGDDVGTLGFSVEGPSQAKIECDDKGDGSCDVRYWPQEAGEYAVHVLCNSEDIRLSPFMADIREAPQDFHPDRVKARGPGLEKTGVAVNKPAEFTVDAKHAGKAPLRVQVQDNEGCSVEATVKDNGNGTYSCSYVPRKPVKHTAMVSWGGVSIPNSPFRVNVGAGSHPNKVKVYGPGVAKTGLKAHEPTYFTVDCTEAGQGDVSIGIKCAPGVVGPTEADIDFDIIRNDNDTFTVKYTPCGAGSYTIMVLFADQATPTSPIRVKVEPSHDASKVKAEGPGLNRTGVELGKPTHFTVNAKTAGKGKLDVQFSGLAKGDAVRDVDIIDHHDNTYTVKYIPVQQGPVGVNVTYGGDHIPKSPFSVGVSPSLDLSKIKVSGLGDKVDVGKDQEFTVKSKGAGGQGKVASKIVSPSGAAVPCKVEPGLGADNSVVRFVPREEGPYEVEVTYDGVPVPGSPFPLEAVAPTKPSKVKAFGPGLQGGNAGSPARFTIDTKGAGTGGLGLTVEGPCEAQLECLDNGDGTCSVSYVPTEPGDYNINILFADTHIPGSPFKAHVAPCFDASKVKCSGPGLERATAGEVGQFQVDCSSAGSAELTIEICSEAGLPAEVYIQDHGDGTHTITYIPLCPGAYTVTIKYGGQPVPNFPSKLQVEPAVDTSGVQCYGPGIEGQGVFREATTEFSVDARALTQTGGPHVKARVANPSGNLTDTYVQDCGDGTYKVEYTPYEEGVHSVDVTYDGSPVPSSPFQVPVTEGCDPSRVRVHGPGIQSGTTNKPNKFTVETRGAGTGGLGLAVEGPSEAKMSCMDNKDGSCSVEYIPYEAGTYSLNVTYGGHQVPGSPFKVPVHDVTDASKVKCSGPGLSPGMVRANLPQSFQVDTSKAGVAPLQVKVQGPKGLVEPVDVVDNADGTQTVNYVPSREGSYSISVLYGEEEVPRSPFKVKVLPTHDASKVKASGPGLNTTGVPASLPVEFTIDAKDAGEGLLAVQITDPEGKPKKTHIQDNHDGTYTVAYVPDVPGRYTILIKYGGDEIPFSPYRVRAVPTGDASKCTVTVSIGGHGLGAGIGPTIQIGEETVITVDTKAAGKGKVTCTVCTPDGSEVDVDVVENEDGTFDIFYTAPQPGKYVICVRFGGEHVPNSPFQVTALAGDQPTVQTPLRSQQLAPQYNYPQGSQQTWIPERPMVGVNGLDVTSLRPFDLVIPFTIKKGEITGEVRMPSGKVAQPSITDNKDGTVTVRYSPSEAGLHEMDIRYDNMHIPGSPLQFYVDYVNCGHITAYGPGLTHGVVNKPATFTVNTKDAGEGGLSLAIEGPSKAEISCTDNQDGTCSVSYLPVLPGDYSILVKYNDQHIPGSPFTARVTGDDSMRMSHLKVGSAADIPINISETDLSLLTATVVPPSGREEPCLLKRLRNGHVGISFVPKETGEHLVHVKKNGQHVASSPIPVVISQSEIGDASRVRVSGQGLHEGHTFEPAEFIIDTRDAGYGGLSLSIEGPSKVDINTEDLEDGTCRVTYCPTEPGNYIINIKFADQHVPGSPFSVKVTGEGRVKESITRRRRAPSVANIGSHCDLSLKIPEISIQDMTAQVTSPSGKTHEAEIVEGENHTYCIRFVPAEMGMHTVSVKYKGQHVPGSPFQFTVGPLGEGGAHKVRAGGPGLERAEVGVPAEFGIWTREAGAGGLAIAVEGPSKAEISFEDRKDGSCGVAYVVQEPGDYEVSVKFNEEHIPDSPFVVPVASPSGDARRLTVSSLQESGLKVNQPASFAVSLNGAKGAIDAKVHSPSGALEECYVTEIDQDKYAVRFIPRENGIYLIDVKFNGTHIPGSPFKIRVGEPGHGGDPGLVSAYGAGLEGGVTGSPAEFIVNTSNAGAGALSVTIDGPSKVKMDCQECPEGYRVTYTPMAPGSYLISIKYGGPYHIGGSPFKAKVTGPRLVSNHSLHETSSVFVDSLTKVATVPQHATSGPGPADVSKVVAKGLGLSKAYVGQKSNFTVDCSKAGNNMLLVGVHGPRTPCEEILVKHMGSRLYSVSYLLKDKGEYTLVVKWGDEHIPGSPYRIMVP</sequence>
<accession>Q8BTM8</accession>
<accession>B7FAV0</accession>
<accession>O54934</accession>
<accession>Q7TQI1</accession>
<accession>Q8BLK1</accession>
<accession>Q8BTN7</accession>
<accession>Q8VHX5</accession>
<accession>Q8VHX8</accession>
<accession>Q99KQ2</accession>
<protein>
    <recommendedName>
        <fullName>Filamin-A</fullName>
        <shortName>FLN-A</shortName>
    </recommendedName>
    <alternativeName>
        <fullName>Actin-binding protein 280</fullName>
        <shortName>ABP-280</shortName>
    </alternativeName>
    <alternativeName>
        <fullName>Alpha-filamin</fullName>
    </alternativeName>
    <alternativeName>
        <fullName>Endothelial actin-binding protein</fullName>
    </alternativeName>
    <alternativeName>
        <fullName>Filamin-1</fullName>
    </alternativeName>
    <alternativeName>
        <fullName>Non-muscle filamin</fullName>
    </alternativeName>
</protein>
<comment type="function">
    <text evidence="1 6 7 9 13 14">Actin binding protein that promotes orthogonal branching of actin filaments and links actin filaments to membrane glycoproteins. Anchors various transmembrane proteins to the actin cytoskeleton and serves as a scaffold for a wide range of cytoplasmic signaling proteins (By similarity). Interaction with FLNB may allow neuroblast migration from the ventricular zone into the cortical plate. Tethers cell surface-localized furin, modulates its rate of internalization and directs its intracellular trafficking. Involved in ciliogenesis. Plays a role in cell-cell contacts and adherens junctions during the development of blood vessels, heart and brain organs (PubMed:17172441). Plays a role in platelets morphology through interaction with SYK that regulates ITAM- and ITAM-like-containing receptor signaling, resulting in by platelet cytoskeleton organization maintenance (PubMed:20713593). During the axon guidance process, required for growth cone collapse induced by SEMA3A-mediated stimulation of neurons (PubMed:25358863).</text>
</comment>
<comment type="subunit">
    <text evidence="1 2 8 11 12 14">Homodimer. Interacts with FCGR1A, FLNB, FURIN, HSPB7, KCND2, INPPL1, MYOT, MYOZ1, PDLIM2, ARHGAP24, PSEN1, PSEN2 and ECSCR. Also interacts with various other binding partners in addition to filamentous actin. Interacts (via N-terminus) with TAF1B. Interacts (via N-terminus) with MIS18BP1 (via N-terminus) (By similarity). Interacts with TMEM67 (via C-terminus) and MKS1 (By similarity). Interacts (via actin-binding domain) with MICALL2 (via calponin-homology (CH) domain). Interacts with RFLNA and RFLNB (PubMed:21709252, PubMed:24436304). Interacts (via filamin repeat 5) with SYK; docks SYK to the plasma membrane. Interacts (via filamin repeats 19 and 21) with DRD3; increased PKA-mediated phosphorylation at Ser-2152. Interacts (via filamin repeat 21) with MAS1, AGTR1 and ADRA1D; increases PKA-mediated phosphorylation of FLNA at Ser-2152. Interacts (via filamin repeats 4, 9, 12, 17, 19, 21, and 23) with GP1BA (high affinity), ITGB7, ITGB2 and FBLIM1 (By similarity). Interacts with CEACAM1 (via cytoplasmic domain); inhibits cell migration and cell scattering by interfering with the interaction between FLNA and RALA (By similarity). Interacts with FOXC1 (By similarity). Interacts (via calponin-homology (CH) domain 1 and filamin repeat 24) with CRMP1; the interaction alters FLNA ternary structure and thus promotes FLNA dissociation from F-actin (By similarity). Interacts with DPYSL3/CRMP3 and DPYSL4/CRMP4 (By similarity).</text>
</comment>
<comment type="interaction">
    <interactant intactId="EBI-641991">
        <id>Q8BTM8</id>
    </interactant>
    <interactant intactId="EBI-617954">
        <id>Q8CIH5</id>
        <label>Plcg2</label>
    </interactant>
    <organismsDiffer>false</organismsDiffer>
    <experiments>3</experiments>
</comment>
<comment type="subcellular location">
    <subcellularLocation>
        <location evidence="1">Cytoplasm</location>
        <location evidence="1">Cell cortex</location>
    </subcellularLocation>
    <subcellularLocation>
        <location evidence="13">Cytoplasm</location>
        <location evidence="13">Cytoskeleton</location>
    </subcellularLocation>
    <subcellularLocation>
        <location evidence="13">Perikaryon</location>
    </subcellularLocation>
    <subcellularLocation>
        <location evidence="13">Cell projection</location>
        <location evidence="13">Growth cone</location>
    </subcellularLocation>
    <subcellularLocation>
        <location evidence="10">Cell projection</location>
        <location evidence="10">Podosome</location>
    </subcellularLocation>
    <text evidence="10 13">Colocalizes with CPMR1 in the central region of DRG neuron growth cone (PubMed:25358863). Following SEMA3A stimulation of DRG neurons, colocalizes with F-actin (PubMed:25358863). Localized to the core of myotube podosomes (PubMed:23525008).</text>
</comment>
<comment type="alternative products">
    <event type="alternative splicing"/>
    <isoform>
        <id>Q8BTM8-1</id>
        <name>1</name>
        <sequence type="displayed"/>
    </isoform>
    <isoform>
        <id>Q8BTM8-2</id>
        <name>2</name>
        <sequence type="described" ref="VSP_008779 VSP_008780"/>
    </isoform>
</comment>
<comment type="tissue specificity">
    <text>Widely expressed. Highly expressed in Purkinje cells.</text>
</comment>
<comment type="developmental stage">
    <text evidence="5 13">Widely distributed (PubMed:11807098). Expressed at 12.5 dpc in the ventricular and subventricular zones. Highly expressed at 16 dpc in blood vessels, renal cortices, respiratory and alimentary tracts, olfactory epithelium, presumed isles of hematopoiesis within the liver; lower expression in the cerebral cortex and choroid plexus (PubMed:11807098). In 12 dpc embryos, expressed in DRG neurons, motoneurons and the neuroepithelial cell layer around the central canal in spinal cord (PubMed:25358863).</text>
</comment>
<comment type="domain">
    <text evidence="2">Comprised of a NH2-terminal actin-binding domain, 24 immunoglobulin-like internally homologous repeats and two hinge regions. Repeat 24 and the second hinge domain are important for dimer formation. Filamin repeat 20 interacts with filamin repeat 21 masking the ligand binding site on filamin repeat 21, resulting in an autoinhibited conformation. The autoinhibition can be relieved by ligands like ITGB7 or FBLIM1. Filamin repeats 19 and 21 can simultaneously engage ligands.</text>
</comment>
<comment type="PTM">
    <text evidence="2">Phosphorylation at Ser-2152 is negatively regulated by the autoinhibited conformation of filamin repeats 19-21. Ligand binding induces a conformational switch triggering phosphorylation at Ser-2152 by PKA.</text>
</comment>
<comment type="PTM">
    <text evidence="2">Polyubiquitination in the CH1 domain by a SCF-like complex containing ASB2 leads to proteasomal degradation. Prior dissociation from actin may be required to expose the target lysines. Ubiquitinated in endothelial cells by RNF213 downstream of the non-canonical Wnt signaling pathway, leading to its degradation by the proteasome.</text>
</comment>
<comment type="disruption phenotype">
    <text evidence="6 7">Female heterozygous knockout mice show normal development, but 20% die in the first 3-4 months with many anomalies, including lung edema and emphysema, liver thrombi and necrosis, leukocytosis, and heart dilation. Some females die after birth; only about 50% of expected female heterozygous mice are observed at weaning. Male hemizygous knockout mice die by embryonic day 14.5 dpc with vascular defects; their blood vessels are coarse and dilated and extend aberrant branches and sprouts into somitic tissues. Male hemizygous knockout mice display severe cardiac structural defects involving ventricles, atria, and outflow tracts. Conditional Flna knockout males, in the neural crest, survive until birth but die on the first postnatal day with cyanosis; all males show abnormal cardiac outflow tracts (PubMed:17172441). Female heterozygous knockout mice present a mild thrombocytopenia and conditional Flna knockout males, in platelets display a macrothrombocytopenia (PubMed:20713593).</text>
</comment>
<comment type="miscellaneous">
    <molecule>Isoform 2</molecule>
    <text evidence="16">May be due to an intron retention.</text>
</comment>
<comment type="similarity">
    <text evidence="16">Belongs to the filamin family.</text>
</comment>
<comment type="sequence caution" evidence="16">
    <conflict type="erroneous initiation">
        <sequence resource="EMBL-CDS" id="BAC40787"/>
    </conflict>
    <text>Truncated N-terminus.</text>
</comment>
<comment type="sequence caution" evidence="16">
    <conflict type="erroneous initiation">
        <sequence resource="EMBL-CDS" id="BAC40837"/>
    </conflict>
    <text>Truncated N-terminus.</text>
</comment>
<comment type="sequence caution" evidence="16">
    <conflict type="frameshift">
        <sequence resource="EMBL" id="BC038478"/>
    </conflict>
</comment>
<name>FLNA_MOUSE</name>
<proteinExistence type="evidence at protein level"/>